<feature type="transit peptide" description="Mitochondrion" evidence="1">
    <location>
        <begin position="1"/>
        <end position="28"/>
    </location>
</feature>
<feature type="chain" id="PRO_0000273076" description="Large ribosomal subunit protein uL10m">
    <location>
        <begin position="29"/>
        <end position="262"/>
    </location>
</feature>
<feature type="region of interest" description="Disordered" evidence="3">
    <location>
        <begin position="243"/>
        <end position="262"/>
    </location>
</feature>
<feature type="sequence conflict" description="In Ref. 1; BAE42195." evidence="4" ref="1">
    <original>R</original>
    <variation>Q</variation>
    <location>
        <position position="141"/>
    </location>
</feature>
<feature type="sequence conflict" description="In Ref. 1; BAE42195." evidence="4" ref="1">
    <original>A</original>
    <variation>S</variation>
    <location>
        <position position="262"/>
    </location>
</feature>
<evidence type="ECO:0000250" key="1"/>
<evidence type="ECO:0000250" key="2">
    <source>
        <dbReference type="UniProtKB" id="Q7Z7H8"/>
    </source>
</evidence>
<evidence type="ECO:0000256" key="3">
    <source>
        <dbReference type="SAM" id="MobiDB-lite"/>
    </source>
</evidence>
<evidence type="ECO:0000305" key="4"/>
<sequence length="262" mass="29396">MAAAVAGILRGGLPPRAAWLPTLQTVRHGSKAVTRHWRVMHFQRQKLMAITEYIPPKPAINPRCLPPPPKPPKEESGLVRLLRQDIVAVFRDNRMIAVCQNVALSAEDKLLLRHQLRKHKIFIKVFPSQVLKPFLENSKYRNLLPLFVGHNLLLVSEEPKVKEMVRVLKSVPFLPLLGGCVDDTILSRQGLVDYAKLPSLDQLQGQLVGGLTHLMAQTRYLLQHQPVQLTSLLDQYVKEQNEGDCATSANEKLHPPDPAPDA</sequence>
<comment type="subunit">
    <text evidence="2">Component of the mitochondrial ribosome large subunit (39S) which comprises a 16S rRNA and about 50 distinct proteins.</text>
</comment>
<comment type="subcellular location">
    <subcellularLocation>
        <location evidence="2">Mitochondrion</location>
    </subcellularLocation>
</comment>
<comment type="similarity">
    <text evidence="4">Belongs to the universal ribosomal protein uL10 family.</text>
</comment>
<organism>
    <name type="scientific">Mus musculus</name>
    <name type="common">Mouse</name>
    <dbReference type="NCBI Taxonomy" id="10090"/>
    <lineage>
        <taxon>Eukaryota</taxon>
        <taxon>Metazoa</taxon>
        <taxon>Chordata</taxon>
        <taxon>Craniata</taxon>
        <taxon>Vertebrata</taxon>
        <taxon>Euteleostomi</taxon>
        <taxon>Mammalia</taxon>
        <taxon>Eutheria</taxon>
        <taxon>Euarchontoglires</taxon>
        <taxon>Glires</taxon>
        <taxon>Rodentia</taxon>
        <taxon>Myomorpha</taxon>
        <taxon>Muroidea</taxon>
        <taxon>Muridae</taxon>
        <taxon>Murinae</taxon>
        <taxon>Mus</taxon>
        <taxon>Mus</taxon>
    </lineage>
</organism>
<gene>
    <name type="primary">Mrpl10</name>
</gene>
<proteinExistence type="evidence at protein level"/>
<reference key="1">
    <citation type="journal article" date="2005" name="Science">
        <title>The transcriptional landscape of the mammalian genome.</title>
        <authorList>
            <person name="Carninci P."/>
            <person name="Kasukawa T."/>
            <person name="Katayama S."/>
            <person name="Gough J."/>
            <person name="Frith M.C."/>
            <person name="Maeda N."/>
            <person name="Oyama R."/>
            <person name="Ravasi T."/>
            <person name="Lenhard B."/>
            <person name="Wells C."/>
            <person name="Kodzius R."/>
            <person name="Shimokawa K."/>
            <person name="Bajic V.B."/>
            <person name="Brenner S.E."/>
            <person name="Batalov S."/>
            <person name="Forrest A.R."/>
            <person name="Zavolan M."/>
            <person name="Davis M.J."/>
            <person name="Wilming L.G."/>
            <person name="Aidinis V."/>
            <person name="Allen J.E."/>
            <person name="Ambesi-Impiombato A."/>
            <person name="Apweiler R."/>
            <person name="Aturaliya R.N."/>
            <person name="Bailey T.L."/>
            <person name="Bansal M."/>
            <person name="Baxter L."/>
            <person name="Beisel K.W."/>
            <person name="Bersano T."/>
            <person name="Bono H."/>
            <person name="Chalk A.M."/>
            <person name="Chiu K.P."/>
            <person name="Choudhary V."/>
            <person name="Christoffels A."/>
            <person name="Clutterbuck D.R."/>
            <person name="Crowe M.L."/>
            <person name="Dalla E."/>
            <person name="Dalrymple B.P."/>
            <person name="de Bono B."/>
            <person name="Della Gatta G."/>
            <person name="di Bernardo D."/>
            <person name="Down T."/>
            <person name="Engstrom P."/>
            <person name="Fagiolini M."/>
            <person name="Faulkner G."/>
            <person name="Fletcher C.F."/>
            <person name="Fukushima T."/>
            <person name="Furuno M."/>
            <person name="Futaki S."/>
            <person name="Gariboldi M."/>
            <person name="Georgii-Hemming P."/>
            <person name="Gingeras T.R."/>
            <person name="Gojobori T."/>
            <person name="Green R.E."/>
            <person name="Gustincich S."/>
            <person name="Harbers M."/>
            <person name="Hayashi Y."/>
            <person name="Hensch T.K."/>
            <person name="Hirokawa N."/>
            <person name="Hill D."/>
            <person name="Huminiecki L."/>
            <person name="Iacono M."/>
            <person name="Ikeo K."/>
            <person name="Iwama A."/>
            <person name="Ishikawa T."/>
            <person name="Jakt M."/>
            <person name="Kanapin A."/>
            <person name="Katoh M."/>
            <person name="Kawasawa Y."/>
            <person name="Kelso J."/>
            <person name="Kitamura H."/>
            <person name="Kitano H."/>
            <person name="Kollias G."/>
            <person name="Krishnan S.P."/>
            <person name="Kruger A."/>
            <person name="Kummerfeld S.K."/>
            <person name="Kurochkin I.V."/>
            <person name="Lareau L.F."/>
            <person name="Lazarevic D."/>
            <person name="Lipovich L."/>
            <person name="Liu J."/>
            <person name="Liuni S."/>
            <person name="McWilliam S."/>
            <person name="Madan Babu M."/>
            <person name="Madera M."/>
            <person name="Marchionni L."/>
            <person name="Matsuda H."/>
            <person name="Matsuzawa S."/>
            <person name="Miki H."/>
            <person name="Mignone F."/>
            <person name="Miyake S."/>
            <person name="Morris K."/>
            <person name="Mottagui-Tabar S."/>
            <person name="Mulder N."/>
            <person name="Nakano N."/>
            <person name="Nakauchi H."/>
            <person name="Ng P."/>
            <person name="Nilsson R."/>
            <person name="Nishiguchi S."/>
            <person name="Nishikawa S."/>
            <person name="Nori F."/>
            <person name="Ohara O."/>
            <person name="Okazaki Y."/>
            <person name="Orlando V."/>
            <person name="Pang K.C."/>
            <person name="Pavan W.J."/>
            <person name="Pavesi G."/>
            <person name="Pesole G."/>
            <person name="Petrovsky N."/>
            <person name="Piazza S."/>
            <person name="Reed J."/>
            <person name="Reid J.F."/>
            <person name="Ring B.Z."/>
            <person name="Ringwald M."/>
            <person name="Rost B."/>
            <person name="Ruan Y."/>
            <person name="Salzberg S.L."/>
            <person name="Sandelin A."/>
            <person name="Schneider C."/>
            <person name="Schoenbach C."/>
            <person name="Sekiguchi K."/>
            <person name="Semple C.A."/>
            <person name="Seno S."/>
            <person name="Sessa L."/>
            <person name="Sheng Y."/>
            <person name="Shibata Y."/>
            <person name="Shimada H."/>
            <person name="Shimada K."/>
            <person name="Silva D."/>
            <person name="Sinclair B."/>
            <person name="Sperling S."/>
            <person name="Stupka E."/>
            <person name="Sugiura K."/>
            <person name="Sultana R."/>
            <person name="Takenaka Y."/>
            <person name="Taki K."/>
            <person name="Tammoja K."/>
            <person name="Tan S.L."/>
            <person name="Tang S."/>
            <person name="Taylor M.S."/>
            <person name="Tegner J."/>
            <person name="Teichmann S.A."/>
            <person name="Ueda H.R."/>
            <person name="van Nimwegen E."/>
            <person name="Verardo R."/>
            <person name="Wei C.L."/>
            <person name="Yagi K."/>
            <person name="Yamanishi H."/>
            <person name="Zabarovsky E."/>
            <person name="Zhu S."/>
            <person name="Zimmer A."/>
            <person name="Hide W."/>
            <person name="Bult C."/>
            <person name="Grimmond S.M."/>
            <person name="Teasdale R.D."/>
            <person name="Liu E.T."/>
            <person name="Brusic V."/>
            <person name="Quackenbush J."/>
            <person name="Wahlestedt C."/>
            <person name="Mattick J.S."/>
            <person name="Hume D.A."/>
            <person name="Kai C."/>
            <person name="Sasaki D."/>
            <person name="Tomaru Y."/>
            <person name="Fukuda S."/>
            <person name="Kanamori-Katayama M."/>
            <person name="Suzuki M."/>
            <person name="Aoki J."/>
            <person name="Arakawa T."/>
            <person name="Iida J."/>
            <person name="Imamura K."/>
            <person name="Itoh M."/>
            <person name="Kato T."/>
            <person name="Kawaji H."/>
            <person name="Kawagashira N."/>
            <person name="Kawashima T."/>
            <person name="Kojima M."/>
            <person name="Kondo S."/>
            <person name="Konno H."/>
            <person name="Nakano K."/>
            <person name="Ninomiya N."/>
            <person name="Nishio T."/>
            <person name="Okada M."/>
            <person name="Plessy C."/>
            <person name="Shibata K."/>
            <person name="Shiraki T."/>
            <person name="Suzuki S."/>
            <person name="Tagami M."/>
            <person name="Waki K."/>
            <person name="Watahiki A."/>
            <person name="Okamura-Oho Y."/>
            <person name="Suzuki H."/>
            <person name="Kawai J."/>
            <person name="Hayashizaki Y."/>
        </authorList>
    </citation>
    <scope>NUCLEOTIDE SEQUENCE [LARGE SCALE MRNA]</scope>
    <source>
        <strain>C57BL/6J</strain>
        <strain>NOD</strain>
        <tissue>Bone marrow</tissue>
        <tissue>Kidney</tissue>
        <tissue>Pancreas</tissue>
    </source>
</reference>
<reference key="2">
    <citation type="journal article" date="2004" name="Genome Res.">
        <title>The status, quality, and expansion of the NIH full-length cDNA project: the Mammalian Gene Collection (MGC).</title>
        <authorList>
            <consortium name="The MGC Project Team"/>
        </authorList>
    </citation>
    <scope>NUCLEOTIDE SEQUENCE [LARGE SCALE MRNA]</scope>
    <source>
        <strain>FVB/N</strain>
        <tissue>Mammary tumor</tissue>
    </source>
</reference>
<reference key="3">
    <citation type="journal article" date="2010" name="Cell">
        <title>A tissue-specific atlas of mouse protein phosphorylation and expression.</title>
        <authorList>
            <person name="Huttlin E.L."/>
            <person name="Jedrychowski M.P."/>
            <person name="Elias J.E."/>
            <person name="Goswami T."/>
            <person name="Rad R."/>
            <person name="Beausoleil S.A."/>
            <person name="Villen J."/>
            <person name="Haas W."/>
            <person name="Sowa M.E."/>
            <person name="Gygi S.P."/>
        </authorList>
    </citation>
    <scope>IDENTIFICATION BY MASS SPECTROMETRY [LARGE SCALE ANALYSIS]</scope>
    <source>
        <tissue>Brain</tissue>
        <tissue>Brown adipose tissue</tissue>
        <tissue>Heart</tissue>
        <tissue>Kidney</tissue>
        <tissue>Liver</tissue>
        <tissue>Lung</tissue>
        <tissue>Pancreas</tissue>
        <tissue>Spleen</tissue>
        <tissue>Testis</tissue>
    </source>
</reference>
<accession>Q3TBW2</accession>
<accession>Q9CQD2</accession>
<protein>
    <recommendedName>
        <fullName evidence="4">Large ribosomal subunit protein uL10m</fullName>
    </recommendedName>
    <alternativeName>
        <fullName>39S ribosomal protein L10, mitochondrial</fullName>
        <shortName>L10mt</shortName>
        <shortName>MRP-L10</shortName>
    </alternativeName>
</protein>
<keyword id="KW-0496">Mitochondrion</keyword>
<keyword id="KW-1185">Reference proteome</keyword>
<keyword id="KW-0687">Ribonucleoprotein</keyword>
<keyword id="KW-0689">Ribosomal protein</keyword>
<keyword id="KW-0809">Transit peptide</keyword>
<name>RM10_MOUSE</name>
<dbReference type="EMBL" id="AK002865">
    <property type="protein sequence ID" value="BAB22415.1"/>
    <property type="molecule type" value="mRNA"/>
</dbReference>
<dbReference type="EMBL" id="AK007643">
    <property type="protein sequence ID" value="BAB25158.1"/>
    <property type="molecule type" value="mRNA"/>
</dbReference>
<dbReference type="EMBL" id="AK150774">
    <property type="protein sequence ID" value="BAE29840.1"/>
    <property type="molecule type" value="mRNA"/>
</dbReference>
<dbReference type="EMBL" id="AK171028">
    <property type="protein sequence ID" value="BAE42195.1"/>
    <property type="molecule type" value="mRNA"/>
</dbReference>
<dbReference type="EMBL" id="BC016219">
    <property type="protein sequence ID" value="AAH16219.1"/>
    <property type="molecule type" value="mRNA"/>
</dbReference>
<dbReference type="CCDS" id="CCDS25312.1"/>
<dbReference type="RefSeq" id="NP_080430.1">
    <property type="nucleotide sequence ID" value="NM_026154.3"/>
</dbReference>
<dbReference type="SMR" id="Q3TBW2"/>
<dbReference type="BioGRID" id="223525">
    <property type="interactions" value="27"/>
</dbReference>
<dbReference type="ComplexPortal" id="CPX-5302">
    <property type="entry name" value="39S mitochondrial large ribosomal subunit"/>
</dbReference>
<dbReference type="FunCoup" id="Q3TBW2">
    <property type="interactions" value="2422"/>
</dbReference>
<dbReference type="STRING" id="10090.ENSMUSP00000001485"/>
<dbReference type="GlyGen" id="Q3TBW2">
    <property type="glycosylation" value="1 site, 1 O-linked glycan (1 site)"/>
</dbReference>
<dbReference type="iPTMnet" id="Q3TBW2"/>
<dbReference type="PhosphoSitePlus" id="Q3TBW2"/>
<dbReference type="SwissPalm" id="Q3TBW2"/>
<dbReference type="jPOST" id="Q3TBW2"/>
<dbReference type="PaxDb" id="10090-ENSMUSP00000001485"/>
<dbReference type="PeptideAtlas" id="Q3TBW2"/>
<dbReference type="ProteomicsDB" id="301601"/>
<dbReference type="Pumba" id="Q3TBW2"/>
<dbReference type="Antibodypedia" id="17772">
    <property type="antibodies" value="173 antibodies from 25 providers"/>
</dbReference>
<dbReference type="DNASU" id="107732"/>
<dbReference type="Ensembl" id="ENSMUST00000001485.10">
    <property type="protein sequence ID" value="ENSMUSP00000001485.4"/>
    <property type="gene ID" value="ENSMUSG00000001445.11"/>
</dbReference>
<dbReference type="GeneID" id="107732"/>
<dbReference type="KEGG" id="mmu:107732"/>
<dbReference type="UCSC" id="uc007ldm.1">
    <property type="organism name" value="mouse"/>
</dbReference>
<dbReference type="AGR" id="MGI:1333801"/>
<dbReference type="CTD" id="124995"/>
<dbReference type="MGI" id="MGI:1333801">
    <property type="gene designation" value="Mrpl10"/>
</dbReference>
<dbReference type="VEuPathDB" id="HostDB:ENSMUSG00000001445"/>
<dbReference type="eggNOG" id="KOG4241">
    <property type="taxonomic scope" value="Eukaryota"/>
</dbReference>
<dbReference type="GeneTree" id="ENSGT00390000000603"/>
<dbReference type="HOGENOM" id="CLU_073093_0_0_1"/>
<dbReference type="InParanoid" id="Q3TBW2"/>
<dbReference type="OMA" id="RHRLYKH"/>
<dbReference type="OrthoDB" id="360689at2759"/>
<dbReference type="PhylomeDB" id="Q3TBW2"/>
<dbReference type="TreeFam" id="TF321349"/>
<dbReference type="Reactome" id="R-MMU-5389840">
    <property type="pathway name" value="Mitochondrial translation elongation"/>
</dbReference>
<dbReference type="Reactome" id="R-MMU-5419276">
    <property type="pathway name" value="Mitochondrial translation termination"/>
</dbReference>
<dbReference type="BioGRID-ORCS" id="107732">
    <property type="hits" value="28 hits in 79 CRISPR screens"/>
</dbReference>
<dbReference type="ChiTaRS" id="Mrpl10">
    <property type="organism name" value="mouse"/>
</dbReference>
<dbReference type="PRO" id="PR:Q3TBW2"/>
<dbReference type="Proteomes" id="UP000000589">
    <property type="component" value="Chromosome 11"/>
</dbReference>
<dbReference type="RNAct" id="Q3TBW2">
    <property type="molecule type" value="protein"/>
</dbReference>
<dbReference type="Bgee" id="ENSMUSG00000001445">
    <property type="expression patterns" value="Expressed in yolk sac and 249 other cell types or tissues"/>
</dbReference>
<dbReference type="ExpressionAtlas" id="Q3TBW2">
    <property type="expression patterns" value="baseline and differential"/>
</dbReference>
<dbReference type="GO" id="GO:0005743">
    <property type="term" value="C:mitochondrial inner membrane"/>
    <property type="evidence" value="ECO:0000303"/>
    <property type="project" value="ComplexPortal"/>
</dbReference>
<dbReference type="GO" id="GO:0005762">
    <property type="term" value="C:mitochondrial large ribosomal subunit"/>
    <property type="evidence" value="ECO:0000250"/>
    <property type="project" value="UniProtKB"/>
</dbReference>
<dbReference type="GO" id="GO:0005739">
    <property type="term" value="C:mitochondrion"/>
    <property type="evidence" value="ECO:0007005"/>
    <property type="project" value="MGI"/>
</dbReference>
<dbReference type="GO" id="GO:0005654">
    <property type="term" value="C:nucleoplasm"/>
    <property type="evidence" value="ECO:0007669"/>
    <property type="project" value="Ensembl"/>
</dbReference>
<dbReference type="GO" id="GO:1990904">
    <property type="term" value="C:ribonucleoprotein complex"/>
    <property type="evidence" value="ECO:0000250"/>
    <property type="project" value="UniProtKB"/>
</dbReference>
<dbReference type="GO" id="GO:0003735">
    <property type="term" value="F:structural constituent of ribosome"/>
    <property type="evidence" value="ECO:0000250"/>
    <property type="project" value="UniProtKB"/>
</dbReference>
<dbReference type="GO" id="GO:0032543">
    <property type="term" value="P:mitochondrial translation"/>
    <property type="evidence" value="ECO:0000303"/>
    <property type="project" value="ComplexPortal"/>
</dbReference>
<dbReference type="GO" id="GO:0006412">
    <property type="term" value="P:translation"/>
    <property type="evidence" value="ECO:0000250"/>
    <property type="project" value="UniProtKB"/>
</dbReference>
<dbReference type="CDD" id="cd05797">
    <property type="entry name" value="Ribosomal_L10"/>
    <property type="match status" value="1"/>
</dbReference>
<dbReference type="FunFam" id="3.30.70.1730:FF:000006">
    <property type="entry name" value="39S ribosomal protein L10, mitochondrial"/>
    <property type="match status" value="1"/>
</dbReference>
<dbReference type="Gene3D" id="3.30.70.1730">
    <property type="match status" value="1"/>
</dbReference>
<dbReference type="InterPro" id="IPR043141">
    <property type="entry name" value="Ribosomal_uL10-like_sf"/>
</dbReference>
<dbReference type="InterPro" id="IPR047865">
    <property type="entry name" value="Ribosomal_uL10_bac_type"/>
</dbReference>
<dbReference type="PANTHER" id="PTHR11560">
    <property type="entry name" value="39S RIBOSOMAL PROTEIN L10, MITOCHONDRIAL"/>
    <property type="match status" value="1"/>
</dbReference>
<dbReference type="SUPFAM" id="SSF160369">
    <property type="entry name" value="Ribosomal protein L10-like"/>
    <property type="match status" value="1"/>
</dbReference>